<gene>
    <name evidence="1" type="primary">psbL</name>
    <name type="ordered locus">smr0007</name>
</gene>
<organism>
    <name type="scientific">Synechocystis sp. (strain ATCC 27184 / PCC 6803 / Kazusa)</name>
    <dbReference type="NCBI Taxonomy" id="1111708"/>
    <lineage>
        <taxon>Bacteria</taxon>
        <taxon>Bacillati</taxon>
        <taxon>Cyanobacteriota</taxon>
        <taxon>Cyanophyceae</taxon>
        <taxon>Synechococcales</taxon>
        <taxon>Merismopediaceae</taxon>
        <taxon>Synechocystis</taxon>
    </lineage>
</organism>
<name>PSBL_SYNY3</name>
<proteinExistence type="evidence at protein level"/>
<accession>Q55354</accession>
<dbReference type="EMBL" id="M33897">
    <property type="protein sequence ID" value="AAA27301.1"/>
    <property type="molecule type" value="Genomic_DNA"/>
</dbReference>
<dbReference type="EMBL" id="BA000022">
    <property type="protein sequence ID" value="BAA17094.1"/>
    <property type="molecule type" value="Genomic_DNA"/>
</dbReference>
<dbReference type="PIR" id="S75180">
    <property type="entry name" value="S75180"/>
</dbReference>
<dbReference type="PDB" id="6WJ6">
    <property type="method" value="EM"/>
    <property type="resolution" value="2.58 A"/>
    <property type="chains" value="L=1-39"/>
</dbReference>
<dbReference type="PDB" id="7N8O">
    <property type="method" value="EM"/>
    <property type="resolution" value="1.93 A"/>
    <property type="chains" value="L/l=1-39"/>
</dbReference>
<dbReference type="PDB" id="7RCV">
    <property type="method" value="EM"/>
    <property type="resolution" value="2.01 A"/>
    <property type="chains" value="L/l=1-39"/>
</dbReference>
<dbReference type="PDB" id="8TOW">
    <property type="method" value="EM"/>
    <property type="resolution" value="2.14 A"/>
    <property type="chains" value="L/l=1-39"/>
</dbReference>
<dbReference type="PDB" id="9EH5">
    <property type="method" value="EM"/>
    <property type="resolution" value="1.97 A"/>
    <property type="chains" value="L/l=1-39"/>
</dbReference>
<dbReference type="PDBsum" id="6WJ6"/>
<dbReference type="PDBsum" id="7N8O"/>
<dbReference type="PDBsum" id="7RCV"/>
<dbReference type="PDBsum" id="8TOW"/>
<dbReference type="PDBsum" id="9EH5"/>
<dbReference type="EMDB" id="EMD-21690"/>
<dbReference type="EMDB" id="EMD-24239"/>
<dbReference type="EMDB" id="EMD-24407"/>
<dbReference type="EMDB" id="EMD-41460"/>
<dbReference type="EMDB" id="EMD-48046"/>
<dbReference type="SMR" id="Q55354"/>
<dbReference type="IntAct" id="Q55354">
    <property type="interactions" value="2"/>
</dbReference>
<dbReference type="STRING" id="1148.gene:10497955"/>
<dbReference type="PaxDb" id="1148-1652170"/>
<dbReference type="EnsemblBacteria" id="BAA17094">
    <property type="protein sequence ID" value="BAA17094"/>
    <property type="gene ID" value="BAA17094"/>
</dbReference>
<dbReference type="KEGG" id="syn:smr0007"/>
<dbReference type="eggNOG" id="ENOG5033AKP">
    <property type="taxonomic scope" value="Bacteria"/>
</dbReference>
<dbReference type="InParanoid" id="Q55354"/>
<dbReference type="BioCyc" id="MetaCyc:PSBL-MONOMER"/>
<dbReference type="Proteomes" id="UP000001425">
    <property type="component" value="Chromosome"/>
</dbReference>
<dbReference type="GO" id="GO:0009539">
    <property type="term" value="C:photosystem II reaction center"/>
    <property type="evidence" value="ECO:0007669"/>
    <property type="project" value="InterPro"/>
</dbReference>
<dbReference type="GO" id="GO:0031676">
    <property type="term" value="C:plasma membrane-derived thylakoid membrane"/>
    <property type="evidence" value="ECO:0007669"/>
    <property type="project" value="UniProtKB-SubCell"/>
</dbReference>
<dbReference type="GO" id="GO:0030096">
    <property type="term" value="C:plasma membrane-derived thylakoid photosystem II"/>
    <property type="evidence" value="ECO:0000314"/>
    <property type="project" value="UniProtKB"/>
</dbReference>
<dbReference type="GO" id="GO:0015979">
    <property type="term" value="P:photosynthesis"/>
    <property type="evidence" value="ECO:0007669"/>
    <property type="project" value="UniProtKB-UniRule"/>
</dbReference>
<dbReference type="HAMAP" id="MF_01317">
    <property type="entry name" value="PSII_PsbL"/>
    <property type="match status" value="1"/>
</dbReference>
<dbReference type="InterPro" id="IPR003372">
    <property type="entry name" value="PSII_PsbL"/>
</dbReference>
<dbReference type="InterPro" id="IPR037266">
    <property type="entry name" value="PSII_PsbL_sf"/>
</dbReference>
<dbReference type="NCBIfam" id="NF001972">
    <property type="entry name" value="PRK00753.1"/>
    <property type="match status" value="1"/>
</dbReference>
<dbReference type="Pfam" id="PF02419">
    <property type="entry name" value="PsbL"/>
    <property type="match status" value="1"/>
</dbReference>
<dbReference type="SUPFAM" id="SSF161017">
    <property type="entry name" value="Photosystem II reaction center protein L, PsbL"/>
    <property type="match status" value="1"/>
</dbReference>
<feature type="chain" id="PRO_0000219795" description="Photosystem II reaction center protein L">
    <location>
        <begin position="1"/>
        <end position="39"/>
    </location>
</feature>
<feature type="transmembrane region" description="Helical" evidence="7 8">
    <location>
        <begin position="16"/>
        <end position="37"/>
    </location>
</feature>
<feature type="mutagenesis site" description="Grows like wild-type, increased sensitivity to high light." evidence="6">
    <location>
        <begin position="6"/>
        <end position="8"/>
    </location>
</feature>
<feature type="mutagenesis site" description="Grows like wild-type, decreased dimer formation, increased sensitivity to high light." evidence="6">
    <location>
        <begin position="11"/>
        <end position="12"/>
    </location>
</feature>
<feature type="mutagenesis site" description="Severely impairs photoautotrophic growth, 3-fold less PSII assembles, decreased dimer formation, increased sensitivity to high light with incomplete recovery (increased susceptibility to photodamage)." evidence="6">
    <location>
        <begin position="13"/>
        <end position="15"/>
    </location>
</feature>
<feature type="mutagenesis site" description="Grows significantly slower than wild-type, 88% O(2) evolved, increased sensitivity to high light, 90% dimeric PSII assembled." evidence="4">
    <original>R</original>
    <variation>A</variation>
    <variation>E</variation>
    <location>
        <position position="16"/>
    </location>
</feature>
<feature type="mutagenesis site" description="Behaves like wild-type." evidence="4">
    <original>R</original>
    <variation>K</variation>
    <location>
        <position position="16"/>
    </location>
</feature>
<feature type="mutagenesis site" description="Grows slightly slower than wild-type, increased sensitivity to high light with incomplete recovery (increased susceptibility to photodamage), 80% dimeric PSII assembled." evidence="4">
    <original>Y</original>
    <variation>A</variation>
    <location>
        <position position="20"/>
    </location>
</feature>
<feature type="mutagenesis site" description="Grows slightly slower than wild-type, increased sensitivity to high light, 90% dimeric PSII assembled." evidence="4">
    <original>LL</original>
    <variation>AA</variation>
    <location>
        <begin position="24"/>
        <end position="25"/>
    </location>
</feature>
<feature type="mutagenesis site" description="Grows slightly slower than wild-type, 80% O(2) evolved, increased sensitivity to high light, 90% dimeric PSII assembled." evidence="4">
    <original>F</original>
    <variation>A</variation>
    <location>
        <position position="33"/>
    </location>
</feature>
<feature type="mutagenesis site" description="No photoautotrophic growth, accumulates CP43-less monomeric PSII complexes." evidence="4">
    <location>
        <begin position="36"/>
        <end position="39"/>
    </location>
</feature>
<feature type="mutagenesis site" description="Grows slightly slower than wild-type, 90% dimeric PSII assembled." evidence="4">
    <original>Y</original>
    <variation>A</variation>
    <location>
        <position position="36"/>
    </location>
</feature>
<feature type="mutagenesis site" description="Grows slightly slower than wild-type." evidence="4">
    <original>Y</original>
    <variation>F</variation>
    <location>
        <position position="36"/>
    </location>
</feature>
<feature type="mutagenesis site" description="Grows slightly slower than wild-type; 85% O(2) evolved, increased sensitivity to high light, 60% dimeric PSII assembled." evidence="4">
    <original>F</original>
    <variation>A</variation>
    <location>
        <position position="37"/>
    </location>
</feature>
<feature type="mutagenesis site" description="Grows slightly slower than wild-type; 73% O(2) evolved, increased sensitivity to high light, 60% dimeric PSII assembled." evidence="4">
    <original>F</original>
    <variation>A</variation>
    <location>
        <position position="38"/>
    </location>
</feature>
<feature type="mutagenesis site" description="Grows slightly slower than wild-type, 80% dimeric PSII assembled." evidence="4">
    <original>N</original>
    <variation>A</variation>
    <location>
        <position position="39"/>
    </location>
</feature>
<feature type="helix" evidence="11">
    <location>
        <begin position="16"/>
        <end position="38"/>
    </location>
</feature>
<protein>
    <recommendedName>
        <fullName evidence="1">Photosystem II reaction center protein L</fullName>
        <shortName evidence="1">PSII-L</shortName>
    </recommendedName>
</protein>
<reference key="1">
    <citation type="journal article" date="1990" name="Z. Naturforsch. C">
        <title>Targeted deletion mutagenesis of the beta subunit of cytochrome b559 protein destabilizes the reaction center of photosystem II.</title>
        <authorList>
            <person name="Pakrasi H.B."/>
            <person name="Nyhus K.J."/>
            <person name="Granok H."/>
        </authorList>
    </citation>
    <scope>NUCLEOTIDE SEQUENCE [GENOMIC DNA]</scope>
    <source>
        <strain>ATCC 27184 / PCC 6803 / Kazusa</strain>
    </source>
</reference>
<reference key="2">
    <citation type="journal article" date="1996" name="DNA Res.">
        <title>Sequence analysis of the genome of the unicellular cyanobacterium Synechocystis sp. strain PCC6803. II. Sequence determination of the entire genome and assignment of potential protein-coding regions.</title>
        <authorList>
            <person name="Kaneko T."/>
            <person name="Sato S."/>
            <person name="Kotani H."/>
            <person name="Tanaka A."/>
            <person name="Asamizu E."/>
            <person name="Nakamura Y."/>
            <person name="Miyajima N."/>
            <person name="Hirosawa M."/>
            <person name="Sugiura M."/>
            <person name="Sasamoto S."/>
            <person name="Kimura T."/>
            <person name="Hosouchi T."/>
            <person name="Matsuno A."/>
            <person name="Muraki A."/>
            <person name="Nakazaki N."/>
            <person name="Naruo K."/>
            <person name="Okumura S."/>
            <person name="Shimpo S."/>
            <person name="Takeuchi C."/>
            <person name="Wada T."/>
            <person name="Watanabe A."/>
            <person name="Yamada M."/>
            <person name="Yasuda M."/>
            <person name="Tabata S."/>
        </authorList>
    </citation>
    <scope>NUCLEOTIDE SEQUENCE [LARGE SCALE GENOMIC DNA]</scope>
    <source>
        <strain>ATCC 27184 / PCC 6803 / Kazusa</strain>
    </source>
</reference>
<reference key="3">
    <citation type="journal article" date="2002" name="Biochemistry">
        <title>Proteomic analysis of a highly active photosystem II preparation from the cyanobacterium Synechocystis sp. PCC 6803 reveals the presence of novel polypeptides.</title>
        <authorList>
            <person name="Kashino Y."/>
            <person name="Lauber W.M."/>
            <person name="Carroll J.A."/>
            <person name="Wang Q."/>
            <person name="Whitmarsh J."/>
            <person name="Satoh K."/>
            <person name="Pakrasi H.B."/>
        </authorList>
    </citation>
    <scope>PROTEIN SEQUENCE OF 1-20</scope>
    <scope>SUBUNIT</scope>
    <scope>SUBCELLULAR LOCATION</scope>
</reference>
<reference key="4">
    <citation type="journal article" date="2008" name="Biochemistry">
        <title>Effects of inactivating psbM and psbT on photodamage and assembly of photosystem II in Synechocystis sp. PCC 6803.</title>
        <authorList>
            <person name="Bentley F.K."/>
            <person name="Luo H."/>
            <person name="Dilbeck P."/>
            <person name="Burnap R.L."/>
            <person name="Eaton-Rye J.J."/>
        </authorList>
    </citation>
    <scope>FUNCTION</scope>
    <scope>DISRUPTION PHENOTYPE</scope>
    <source>
        <strain>ATCC 27184 / PCC 6803 / Kazusa</strain>
    </source>
</reference>
<reference key="5">
    <citation type="journal article" date="2008" name="Photosyn. Res.">
        <title>Directed mutagenesis of the transmembrane domain of the PsbL subunit of photosystem II in Synechocystis sp. PCC 6803.</title>
        <authorList>
            <person name="Luo H."/>
            <person name="Eaton-Rye J.J."/>
        </authorList>
    </citation>
    <scope>FUNCTION</scope>
    <scope>DISRUPTION PHENOTYPE</scope>
    <scope>MUTAGENESIS OF ARG-16; TYR-20; 24-LEU-LEU-25; PHE-33; 36-TYR--ASN-39; TYR-36; PHE-37; PHE-38 AND ASN-39</scope>
    <source>
        <strain>ATCC 27184 / PCC 6803 / Kazusa</strain>
    </source>
</reference>
<reference key="6">
    <citation type="journal article" date="2014" name="Biochim. Biophys. Acta">
        <title>The importance of the hydrophilic region of PsbL for the plastoquinone electron acceptor complex of Photosystem II.</title>
        <authorList>
            <person name="Luo H."/>
            <person name="Jackson S.A."/>
            <person name="Fagerlund R.D."/>
            <person name="Summerfield T.C."/>
            <person name="Eaton-Rye J.J."/>
        </authorList>
    </citation>
    <scope>FUNCTION</scope>
    <scope>MUTAGENESIS OF 6-ASN--ASN-8; 11-PRO-VAL-12 AND 13-GLU--ASN-15</scope>
    <source>
        <strain>ATCC 27184 / PCC 6803 / Kazusa</strain>
    </source>
</reference>
<reference evidence="9 10" key="7">
    <citation type="journal article" date="2022" name="Proc. Natl. Acad. Sci. U.S.A.">
        <title>High-resolution cryo-electron microscopy structure of photosystem II from the mesophilic cyanobacterium, Synechocystis sp. PCC 6803.</title>
        <authorList>
            <person name="Gisriel C.J."/>
            <person name="Wang J."/>
            <person name="Liu J."/>
            <person name="Flesher D.A."/>
            <person name="Reiss K.M."/>
            <person name="Huang H.L."/>
            <person name="Yang K.R."/>
            <person name="Armstrong W.H."/>
            <person name="Gunner M.R."/>
            <person name="Batista V.S."/>
            <person name="Debus R.J."/>
            <person name="Brudvig G.W."/>
        </authorList>
    </citation>
    <scope>STRUCTURE BY ELECTRON MICROSCOPY (1.93 ANGSTROMS)</scope>
    <scope>FUNCTION</scope>
    <scope>SUBUNIT</scope>
    <scope>SUBCELLULAR LOCATION</scope>
    <source>
        <strain>ATCC 27184 / PCC 6803 / Kazusa</strain>
    </source>
</reference>
<evidence type="ECO:0000255" key="1">
    <source>
        <dbReference type="HAMAP-Rule" id="MF_01317"/>
    </source>
</evidence>
<evidence type="ECO:0000269" key="2">
    <source>
    </source>
</evidence>
<evidence type="ECO:0000269" key="3">
    <source>
    </source>
</evidence>
<evidence type="ECO:0000269" key="4">
    <source>
    </source>
</evidence>
<evidence type="ECO:0000269" key="5">
    <source>
    </source>
</evidence>
<evidence type="ECO:0000269" key="6">
    <source>
    </source>
</evidence>
<evidence type="ECO:0000269" key="7">
    <source>
    </source>
</evidence>
<evidence type="ECO:0000312" key="8">
    <source>
        <dbReference type="PDB" id="7N8O"/>
    </source>
</evidence>
<evidence type="ECO:0007744" key="9">
    <source>
        <dbReference type="PDB" id="7N8O"/>
    </source>
</evidence>
<evidence type="ECO:0007744" key="10">
    <source>
        <dbReference type="PDB" id="7RCV"/>
    </source>
</evidence>
<evidence type="ECO:0007829" key="11">
    <source>
        <dbReference type="PDB" id="7N8O"/>
    </source>
</evidence>
<keyword id="KW-0002">3D-structure</keyword>
<keyword id="KW-0903">Direct protein sequencing</keyword>
<keyword id="KW-0472">Membrane</keyword>
<keyword id="KW-0602">Photosynthesis</keyword>
<keyword id="KW-0604">Photosystem II</keyword>
<keyword id="KW-0674">Reaction center</keyword>
<keyword id="KW-1185">Reference proteome</keyword>
<keyword id="KW-0793">Thylakoid</keyword>
<keyword id="KW-0812">Transmembrane</keyword>
<keyword id="KW-1133">Transmembrane helix</keyword>
<comment type="function">
    <text evidence="1 3 5 7">One of the components of the core complex of photosystem II (PSII). PSII is a light-driven water:plastoquinone oxidoreductase that uses light energy to abstract electrons from H(2)O, generating O(2) and a proton gradient subsequently used for ATP formation. It consists of a core antenna complex that captures photons, and an electron transfer chain that converts photonic excitation into a charge separation. This subunit is found at the monomer-monomer interface and is required for correct PSII assembly and/or dimerization (PubMed:34937700). Required for PSII activity, at least in part due to its effects on PSII assembly. May make specific contact(s) with lipids.</text>
</comment>
<comment type="subunit">
    <text evidence="1 2 7">PSII is composed of 1 copy each of membrane proteins PsbA, PsbB, PsbC, PsbD, PsbE, PsbF, PsbH, PsbI, PsbJ, PsbK, PsbL, PsbM, PsbT, PsbX, PsbY, PsbZ, Psb30/Ycf12, peripheral proteins PsbO, CyanoQ (PsbQ), PsbU, PsbV and a large number of cofactors. It forms dimeric complexes.</text>
</comment>
<comment type="subcellular location">
    <subcellularLocation>
        <location evidence="1 2 7">Cellular thylakoid membrane</location>
        <topology evidence="1 7">Single-pass membrane protein</topology>
    </subcellularLocation>
</comment>
<comment type="disruption phenotype">
    <text evidence="3 4">Very poor to no photoautotrophic growth, no O(2) evolution. No assembly of PSII monomers or dimers; the CP43-less monomeric intermediate is assembled.</text>
</comment>
<comment type="similarity">
    <text evidence="1">Belongs to the PsbL family.</text>
</comment>
<sequence>MDRNSNPNRQPVELNRTSLYLGLLLVAVLGILFSSYFFN</sequence>